<feature type="chain" id="PRO_0000325372" description="3-phosphoshikimate 1-carboxyvinyltransferase">
    <location>
        <begin position="1"/>
        <end position="438"/>
    </location>
</feature>
<feature type="active site" description="Proton acceptor" evidence="1">
    <location>
        <position position="325"/>
    </location>
</feature>
<feature type="binding site" evidence="1">
    <location>
        <position position="25"/>
    </location>
    <ligand>
        <name>3-phosphoshikimate</name>
        <dbReference type="ChEBI" id="CHEBI:145989"/>
    </ligand>
</feature>
<feature type="binding site" evidence="1">
    <location>
        <position position="25"/>
    </location>
    <ligand>
        <name>phosphoenolpyruvate</name>
        <dbReference type="ChEBI" id="CHEBI:58702"/>
    </ligand>
</feature>
<feature type="binding site" evidence="1">
    <location>
        <position position="26"/>
    </location>
    <ligand>
        <name>3-phosphoshikimate</name>
        <dbReference type="ChEBI" id="CHEBI:145989"/>
    </ligand>
</feature>
<feature type="binding site" evidence="1">
    <location>
        <position position="30"/>
    </location>
    <ligand>
        <name>3-phosphoshikimate</name>
        <dbReference type="ChEBI" id="CHEBI:145989"/>
    </ligand>
</feature>
<feature type="binding site" evidence="1">
    <location>
        <position position="99"/>
    </location>
    <ligand>
        <name>phosphoenolpyruvate</name>
        <dbReference type="ChEBI" id="CHEBI:58702"/>
    </ligand>
</feature>
<feature type="binding site" evidence="1">
    <location>
        <position position="128"/>
    </location>
    <ligand>
        <name>phosphoenolpyruvate</name>
        <dbReference type="ChEBI" id="CHEBI:58702"/>
    </ligand>
</feature>
<feature type="binding site" evidence="1">
    <location>
        <position position="173"/>
    </location>
    <ligand>
        <name>3-phosphoshikimate</name>
        <dbReference type="ChEBI" id="CHEBI:145989"/>
    </ligand>
</feature>
<feature type="binding site" evidence="1">
    <location>
        <position position="175"/>
    </location>
    <ligand>
        <name>3-phosphoshikimate</name>
        <dbReference type="ChEBI" id="CHEBI:145989"/>
    </ligand>
</feature>
<feature type="binding site" evidence="1">
    <location>
        <position position="175"/>
    </location>
    <ligand>
        <name>phosphoenolpyruvate</name>
        <dbReference type="ChEBI" id="CHEBI:58702"/>
    </ligand>
</feature>
<feature type="binding site" evidence="1">
    <location>
        <position position="325"/>
    </location>
    <ligand>
        <name>3-phosphoshikimate</name>
        <dbReference type="ChEBI" id="CHEBI:145989"/>
    </ligand>
</feature>
<feature type="binding site" evidence="1">
    <location>
        <position position="352"/>
    </location>
    <ligand>
        <name>3-phosphoshikimate</name>
        <dbReference type="ChEBI" id="CHEBI:145989"/>
    </ligand>
</feature>
<feature type="binding site" evidence="1">
    <location>
        <position position="356"/>
    </location>
    <ligand>
        <name>phosphoenolpyruvate</name>
        <dbReference type="ChEBI" id="CHEBI:58702"/>
    </ligand>
</feature>
<feature type="binding site" evidence="1">
    <location>
        <position position="398"/>
    </location>
    <ligand>
        <name>phosphoenolpyruvate</name>
        <dbReference type="ChEBI" id="CHEBI:58702"/>
    </ligand>
</feature>
<evidence type="ECO:0000255" key="1">
    <source>
        <dbReference type="HAMAP-Rule" id="MF_00210"/>
    </source>
</evidence>
<comment type="function">
    <text evidence="1">Catalyzes the transfer of the enolpyruvyl moiety of phosphoenolpyruvate (PEP) to the 5-hydroxyl of shikimate-3-phosphate (S3P) to produce enolpyruvyl shikimate-3-phosphate and inorganic phosphate.</text>
</comment>
<comment type="catalytic activity">
    <reaction evidence="1">
        <text>3-phosphoshikimate + phosphoenolpyruvate = 5-O-(1-carboxyvinyl)-3-phosphoshikimate + phosphate</text>
        <dbReference type="Rhea" id="RHEA:21256"/>
        <dbReference type="ChEBI" id="CHEBI:43474"/>
        <dbReference type="ChEBI" id="CHEBI:57701"/>
        <dbReference type="ChEBI" id="CHEBI:58702"/>
        <dbReference type="ChEBI" id="CHEBI:145989"/>
        <dbReference type="EC" id="2.5.1.19"/>
    </reaction>
    <physiologicalReaction direction="left-to-right" evidence="1">
        <dbReference type="Rhea" id="RHEA:21257"/>
    </physiologicalReaction>
</comment>
<comment type="pathway">
    <text evidence="1">Metabolic intermediate biosynthesis; chorismate biosynthesis; chorismate from D-erythrose 4-phosphate and phosphoenolpyruvate: step 6/7.</text>
</comment>
<comment type="subunit">
    <text evidence="1">Monomer.</text>
</comment>
<comment type="subcellular location">
    <subcellularLocation>
        <location evidence="1">Cytoplasm</location>
    </subcellularLocation>
</comment>
<comment type="similarity">
    <text evidence="1">Belongs to the EPSP synthase family.</text>
</comment>
<sequence length="438" mass="47184">MNTNDIRTVKGEKSLQGTIKVPGDKSISHRSLIIGSIAEGETNIEGFLYSEDPLSTADCLRKLGVHIPEIKKDQPFTIRGLGIDGFREPKEILNCGNSGTTMRLLMGLLAGQTDRNFILTGDKSLNERPMGRVSKPLSLMGGKIYGRENGTKAPISITGNKLKGCVIGTPVASAQVKSAILLAGLNASGTTSVIEPASSRDHTERMLKAFGADIKIRGELGRNIVIKSGNNLTGQNILIPGDISSAAFWMIAASIVPESEILVKNVGLNPTRTGILHVMDEMGCDYKIIEKSTIAGEPIGSIKVKYVSNLKPFKVQGDILPKLIDEIPILTVAACFCNGVSEIKDAKELRVKETDRLKVMARQLKKFGANITEKEDGLIITGESKFHSAEVDSETDHRVSMSLAIASLLAKGSTRIARAGASNVSYPTFWDDLEKLIN</sequence>
<proteinExistence type="inferred from homology"/>
<name>AROA_PROM5</name>
<reference key="1">
    <citation type="journal article" date="2007" name="PLoS Genet.">
        <title>Patterns and implications of gene gain and loss in the evolution of Prochlorococcus.</title>
        <authorList>
            <person name="Kettler G.C."/>
            <person name="Martiny A.C."/>
            <person name="Huang K."/>
            <person name="Zucker J."/>
            <person name="Coleman M.L."/>
            <person name="Rodrigue S."/>
            <person name="Chen F."/>
            <person name="Lapidus A."/>
            <person name="Ferriera S."/>
            <person name="Johnson J."/>
            <person name="Steglich C."/>
            <person name="Church G.M."/>
            <person name="Richardson P."/>
            <person name="Chisholm S.W."/>
        </authorList>
    </citation>
    <scope>NUCLEOTIDE SEQUENCE [LARGE SCALE GENOMIC DNA]</scope>
    <source>
        <strain>MIT 9515</strain>
    </source>
</reference>
<protein>
    <recommendedName>
        <fullName evidence="1">3-phosphoshikimate 1-carboxyvinyltransferase</fullName>
        <ecNumber evidence="1">2.5.1.19</ecNumber>
    </recommendedName>
    <alternativeName>
        <fullName evidence="1">5-enolpyruvylshikimate-3-phosphate synthase</fullName>
        <shortName evidence="1">EPSP synthase</shortName>
        <shortName evidence="1">EPSPS</shortName>
    </alternativeName>
</protein>
<keyword id="KW-0028">Amino-acid biosynthesis</keyword>
<keyword id="KW-0057">Aromatic amino acid biosynthesis</keyword>
<keyword id="KW-0963">Cytoplasm</keyword>
<keyword id="KW-0808">Transferase</keyword>
<dbReference type="EC" id="2.5.1.19" evidence="1"/>
<dbReference type="EMBL" id="CP000552">
    <property type="protein sequence ID" value="ABM71887.1"/>
    <property type="molecule type" value="Genomic_DNA"/>
</dbReference>
<dbReference type="RefSeq" id="WP_011819992.1">
    <property type="nucleotide sequence ID" value="NC_008817.1"/>
</dbReference>
<dbReference type="SMR" id="A2BVS6"/>
<dbReference type="STRING" id="167542.P9515_06781"/>
<dbReference type="GeneID" id="60201122"/>
<dbReference type="KEGG" id="pmc:P9515_06781"/>
<dbReference type="eggNOG" id="COG0128">
    <property type="taxonomic scope" value="Bacteria"/>
</dbReference>
<dbReference type="HOGENOM" id="CLU_024321_0_1_3"/>
<dbReference type="OrthoDB" id="9809920at2"/>
<dbReference type="UniPathway" id="UPA00053">
    <property type="reaction ID" value="UER00089"/>
</dbReference>
<dbReference type="Proteomes" id="UP000001589">
    <property type="component" value="Chromosome"/>
</dbReference>
<dbReference type="GO" id="GO:0005737">
    <property type="term" value="C:cytoplasm"/>
    <property type="evidence" value="ECO:0007669"/>
    <property type="project" value="UniProtKB-SubCell"/>
</dbReference>
<dbReference type="GO" id="GO:0003866">
    <property type="term" value="F:3-phosphoshikimate 1-carboxyvinyltransferase activity"/>
    <property type="evidence" value="ECO:0007669"/>
    <property type="project" value="UniProtKB-UniRule"/>
</dbReference>
<dbReference type="GO" id="GO:0008652">
    <property type="term" value="P:amino acid biosynthetic process"/>
    <property type="evidence" value="ECO:0007669"/>
    <property type="project" value="UniProtKB-KW"/>
</dbReference>
<dbReference type="GO" id="GO:0009073">
    <property type="term" value="P:aromatic amino acid family biosynthetic process"/>
    <property type="evidence" value="ECO:0007669"/>
    <property type="project" value="UniProtKB-KW"/>
</dbReference>
<dbReference type="GO" id="GO:0009423">
    <property type="term" value="P:chorismate biosynthetic process"/>
    <property type="evidence" value="ECO:0007669"/>
    <property type="project" value="UniProtKB-UniRule"/>
</dbReference>
<dbReference type="CDD" id="cd01556">
    <property type="entry name" value="EPSP_synthase"/>
    <property type="match status" value="1"/>
</dbReference>
<dbReference type="FunFam" id="3.65.10.10:FF:000005">
    <property type="entry name" value="3-phosphoshikimate 1-carboxyvinyltransferase"/>
    <property type="match status" value="1"/>
</dbReference>
<dbReference type="FunFam" id="3.65.10.10:FF:000006">
    <property type="entry name" value="3-phosphoshikimate 1-carboxyvinyltransferase"/>
    <property type="match status" value="1"/>
</dbReference>
<dbReference type="Gene3D" id="3.65.10.10">
    <property type="entry name" value="Enolpyruvate transferase domain"/>
    <property type="match status" value="2"/>
</dbReference>
<dbReference type="HAMAP" id="MF_00210">
    <property type="entry name" value="EPSP_synth"/>
    <property type="match status" value="1"/>
</dbReference>
<dbReference type="InterPro" id="IPR001986">
    <property type="entry name" value="Enolpyruvate_Tfrase_dom"/>
</dbReference>
<dbReference type="InterPro" id="IPR036968">
    <property type="entry name" value="Enolpyruvate_Tfrase_sf"/>
</dbReference>
<dbReference type="InterPro" id="IPR006264">
    <property type="entry name" value="EPSP_synthase"/>
</dbReference>
<dbReference type="InterPro" id="IPR023193">
    <property type="entry name" value="EPSP_synthase_CS"/>
</dbReference>
<dbReference type="InterPro" id="IPR013792">
    <property type="entry name" value="RNA3'P_cycl/enolpyr_Trfase_a/b"/>
</dbReference>
<dbReference type="NCBIfam" id="TIGR01356">
    <property type="entry name" value="aroA"/>
    <property type="match status" value="1"/>
</dbReference>
<dbReference type="PANTHER" id="PTHR21090">
    <property type="entry name" value="AROM/DEHYDROQUINATE SYNTHASE"/>
    <property type="match status" value="1"/>
</dbReference>
<dbReference type="PANTHER" id="PTHR21090:SF5">
    <property type="entry name" value="PENTAFUNCTIONAL AROM POLYPEPTIDE"/>
    <property type="match status" value="1"/>
</dbReference>
<dbReference type="Pfam" id="PF00275">
    <property type="entry name" value="EPSP_synthase"/>
    <property type="match status" value="1"/>
</dbReference>
<dbReference type="PIRSF" id="PIRSF000505">
    <property type="entry name" value="EPSPS"/>
    <property type="match status" value="1"/>
</dbReference>
<dbReference type="SUPFAM" id="SSF55205">
    <property type="entry name" value="EPT/RTPC-like"/>
    <property type="match status" value="1"/>
</dbReference>
<dbReference type="PROSITE" id="PS00104">
    <property type="entry name" value="EPSP_SYNTHASE_1"/>
    <property type="match status" value="1"/>
</dbReference>
<dbReference type="PROSITE" id="PS00885">
    <property type="entry name" value="EPSP_SYNTHASE_2"/>
    <property type="match status" value="1"/>
</dbReference>
<gene>
    <name evidence="1" type="primary">aroA</name>
    <name type="ordered locus">P9515_06781</name>
</gene>
<accession>A2BVS6</accession>
<organism>
    <name type="scientific">Prochlorococcus marinus (strain MIT 9515)</name>
    <dbReference type="NCBI Taxonomy" id="167542"/>
    <lineage>
        <taxon>Bacteria</taxon>
        <taxon>Bacillati</taxon>
        <taxon>Cyanobacteriota</taxon>
        <taxon>Cyanophyceae</taxon>
        <taxon>Synechococcales</taxon>
        <taxon>Prochlorococcaceae</taxon>
        <taxon>Prochlorococcus</taxon>
    </lineage>
</organism>